<keyword id="KW-0472">Membrane</keyword>
<keyword id="KW-1185">Reference proteome</keyword>
<keyword id="KW-0812">Transmembrane</keyword>
<keyword id="KW-1133">Transmembrane helix</keyword>
<reference key="1">
    <citation type="journal article" date="2005" name="Nucleic Acids Res.">
        <title>Genome dynamics and diversity of Shigella species, the etiologic agents of bacillary dysentery.</title>
        <authorList>
            <person name="Yang F."/>
            <person name="Yang J."/>
            <person name="Zhang X."/>
            <person name="Chen L."/>
            <person name="Jiang Y."/>
            <person name="Yan Y."/>
            <person name="Tang X."/>
            <person name="Wang J."/>
            <person name="Xiong Z."/>
            <person name="Dong J."/>
            <person name="Xue Y."/>
            <person name="Zhu Y."/>
            <person name="Xu X."/>
            <person name="Sun L."/>
            <person name="Chen S."/>
            <person name="Nie H."/>
            <person name="Peng J."/>
            <person name="Xu J."/>
            <person name="Wang Y."/>
            <person name="Yuan Z."/>
            <person name="Wen Y."/>
            <person name="Yao Z."/>
            <person name="Shen Y."/>
            <person name="Qiang B."/>
            <person name="Hou Y."/>
            <person name="Yu J."/>
            <person name="Jin Q."/>
        </authorList>
    </citation>
    <scope>NUCLEOTIDE SEQUENCE [LARGE SCALE GENOMIC DNA]</scope>
    <source>
        <strain>Ss046</strain>
    </source>
</reference>
<name>YOAI_SHISS</name>
<evidence type="ECO:0000255" key="1"/>
<evidence type="ECO:0000305" key="2"/>
<dbReference type="EMBL" id="CP000038">
    <property type="protein sequence ID" value="AAZ88084.1"/>
    <property type="status" value="ALT_INIT"/>
    <property type="molecule type" value="Genomic_DNA"/>
</dbReference>
<dbReference type="RefSeq" id="WP_000999630.1">
    <property type="nucleotide sequence ID" value="NC_007384.1"/>
</dbReference>
<dbReference type="SMR" id="Q3Z2C8"/>
<dbReference type="GeneID" id="93776034"/>
<dbReference type="KEGG" id="ssn:SSON_1373"/>
<dbReference type="HOGENOM" id="CLU_216793_1_0_6"/>
<dbReference type="Proteomes" id="UP000002529">
    <property type="component" value="Chromosome"/>
</dbReference>
<dbReference type="GO" id="GO:0016020">
    <property type="term" value="C:membrane"/>
    <property type="evidence" value="ECO:0007669"/>
    <property type="project" value="UniProtKB-SubCell"/>
</dbReference>
<dbReference type="InterPro" id="IPR048191">
    <property type="entry name" value="YoaI-like"/>
</dbReference>
<dbReference type="NCBIfam" id="NF041475">
    <property type="entry name" value="membrane_YoaI"/>
    <property type="match status" value="1"/>
</dbReference>
<comment type="subcellular location">
    <subcellularLocation>
        <location evidence="2">Membrane</location>
        <topology evidence="2">Single-pass membrane protein</topology>
    </subcellularLocation>
</comment>
<comment type="sequence caution" evidence="2">
    <conflict type="erroneous initiation">
        <sequence resource="EMBL-CDS" id="AAZ88084"/>
    </conflict>
</comment>
<accession>Q3Z2C8</accession>
<feature type="chain" id="PRO_0000248933" description="Uncharacterized protein YoaI">
    <location>
        <begin position="1"/>
        <end position="34"/>
    </location>
</feature>
<feature type="transmembrane region" description="Helical" evidence="1">
    <location>
        <begin position="10"/>
        <end position="30"/>
    </location>
</feature>
<protein>
    <recommendedName>
        <fullName>Uncharacterized protein YoaI</fullName>
    </recommendedName>
</protein>
<sequence length="34" mass="3772">MNDQMFVETLIITSSFFAIAVVLVLSVLLIERTG</sequence>
<gene>
    <name type="primary">yoaI</name>
    <name type="ordered locus">SSON_1373</name>
</gene>
<organism>
    <name type="scientific">Shigella sonnei (strain Ss046)</name>
    <dbReference type="NCBI Taxonomy" id="300269"/>
    <lineage>
        <taxon>Bacteria</taxon>
        <taxon>Pseudomonadati</taxon>
        <taxon>Pseudomonadota</taxon>
        <taxon>Gammaproteobacteria</taxon>
        <taxon>Enterobacterales</taxon>
        <taxon>Enterobacteriaceae</taxon>
        <taxon>Shigella</taxon>
    </lineage>
</organism>
<proteinExistence type="predicted"/>